<reference key="1">
    <citation type="journal article" date="2008" name="J. Biotechnol.">
        <title>The genome of Xanthomonas campestris pv. campestris B100 and its use for the reconstruction of metabolic pathways involved in xanthan biosynthesis.</title>
        <authorList>
            <person name="Vorhoelter F.-J."/>
            <person name="Schneiker S."/>
            <person name="Goesmann A."/>
            <person name="Krause L."/>
            <person name="Bekel T."/>
            <person name="Kaiser O."/>
            <person name="Linke B."/>
            <person name="Patschkowski T."/>
            <person name="Rueckert C."/>
            <person name="Schmid J."/>
            <person name="Sidhu V.K."/>
            <person name="Sieber V."/>
            <person name="Tauch A."/>
            <person name="Watt S.A."/>
            <person name="Weisshaar B."/>
            <person name="Becker A."/>
            <person name="Niehaus K."/>
            <person name="Puehler A."/>
        </authorList>
    </citation>
    <scope>NUCLEOTIDE SEQUENCE [LARGE SCALE GENOMIC DNA]</scope>
    <source>
        <strain>B100</strain>
    </source>
</reference>
<accession>B0RMR4</accession>
<keyword id="KW-0997">Cell inner membrane</keyword>
<keyword id="KW-1003">Cell membrane</keyword>
<keyword id="KW-0460">Magnesium</keyword>
<keyword id="KW-0472">Membrane</keyword>
<keyword id="KW-0808">Transferase</keyword>
<keyword id="KW-0812">Transmembrane</keyword>
<keyword id="KW-1133">Transmembrane helix</keyword>
<keyword id="KW-0831">Ubiquinone biosynthesis</keyword>
<organism>
    <name type="scientific">Xanthomonas campestris pv. campestris (strain B100)</name>
    <dbReference type="NCBI Taxonomy" id="509169"/>
    <lineage>
        <taxon>Bacteria</taxon>
        <taxon>Pseudomonadati</taxon>
        <taxon>Pseudomonadota</taxon>
        <taxon>Gammaproteobacteria</taxon>
        <taxon>Lysobacterales</taxon>
        <taxon>Lysobacteraceae</taxon>
        <taxon>Xanthomonas</taxon>
    </lineage>
</organism>
<proteinExistence type="inferred from homology"/>
<gene>
    <name evidence="1" type="primary">ubiA</name>
    <name type="ordered locus">xcc-b100_0418</name>
</gene>
<protein>
    <recommendedName>
        <fullName evidence="1">4-hydroxybenzoate octaprenyltransferase</fullName>
        <ecNumber evidence="1">2.5.1.39</ecNumber>
    </recommendedName>
    <alternativeName>
        <fullName evidence="1">4-HB polyprenyltransferase</fullName>
    </alternativeName>
</protein>
<evidence type="ECO:0000255" key="1">
    <source>
        <dbReference type="HAMAP-Rule" id="MF_01635"/>
    </source>
</evidence>
<dbReference type="EC" id="2.5.1.39" evidence="1"/>
<dbReference type="EMBL" id="AM920689">
    <property type="protein sequence ID" value="CAP49749.1"/>
    <property type="molecule type" value="Genomic_DNA"/>
</dbReference>
<dbReference type="SMR" id="B0RMR4"/>
<dbReference type="KEGG" id="xca:xcc-b100_0418"/>
<dbReference type="HOGENOM" id="CLU_034879_1_0_6"/>
<dbReference type="UniPathway" id="UPA00232"/>
<dbReference type="Proteomes" id="UP000001188">
    <property type="component" value="Chromosome"/>
</dbReference>
<dbReference type="GO" id="GO:0005886">
    <property type="term" value="C:plasma membrane"/>
    <property type="evidence" value="ECO:0007669"/>
    <property type="project" value="UniProtKB-SubCell"/>
</dbReference>
<dbReference type="GO" id="GO:0008412">
    <property type="term" value="F:4-hydroxybenzoate polyprenyltransferase activity"/>
    <property type="evidence" value="ECO:0007669"/>
    <property type="project" value="UniProtKB-UniRule"/>
</dbReference>
<dbReference type="GO" id="GO:0006744">
    <property type="term" value="P:ubiquinone biosynthetic process"/>
    <property type="evidence" value="ECO:0007669"/>
    <property type="project" value="UniProtKB-UniRule"/>
</dbReference>
<dbReference type="CDD" id="cd13959">
    <property type="entry name" value="PT_UbiA_COQ2"/>
    <property type="match status" value="1"/>
</dbReference>
<dbReference type="FunFam" id="1.10.357.140:FF:000002">
    <property type="entry name" value="4-hydroxybenzoate octaprenyltransferase"/>
    <property type="match status" value="1"/>
</dbReference>
<dbReference type="FunFam" id="1.20.120.1780:FF:000001">
    <property type="entry name" value="4-hydroxybenzoate octaprenyltransferase"/>
    <property type="match status" value="1"/>
</dbReference>
<dbReference type="Gene3D" id="1.10.357.140">
    <property type="entry name" value="UbiA prenyltransferase"/>
    <property type="match status" value="1"/>
</dbReference>
<dbReference type="Gene3D" id="1.20.120.1780">
    <property type="entry name" value="UbiA prenyltransferase"/>
    <property type="match status" value="1"/>
</dbReference>
<dbReference type="HAMAP" id="MF_01635">
    <property type="entry name" value="UbiA"/>
    <property type="match status" value="1"/>
</dbReference>
<dbReference type="InterPro" id="IPR006370">
    <property type="entry name" value="HB_polyprenyltransferase-like"/>
</dbReference>
<dbReference type="InterPro" id="IPR039653">
    <property type="entry name" value="Prenyltransferase"/>
</dbReference>
<dbReference type="InterPro" id="IPR000537">
    <property type="entry name" value="UbiA_prenyltransferase"/>
</dbReference>
<dbReference type="InterPro" id="IPR030470">
    <property type="entry name" value="UbiA_prenylTrfase_CS"/>
</dbReference>
<dbReference type="InterPro" id="IPR044878">
    <property type="entry name" value="UbiA_sf"/>
</dbReference>
<dbReference type="NCBIfam" id="TIGR01474">
    <property type="entry name" value="ubiA_proteo"/>
    <property type="match status" value="1"/>
</dbReference>
<dbReference type="PANTHER" id="PTHR11048:SF28">
    <property type="entry name" value="4-HYDROXYBENZOATE POLYPRENYLTRANSFERASE, MITOCHONDRIAL"/>
    <property type="match status" value="1"/>
</dbReference>
<dbReference type="PANTHER" id="PTHR11048">
    <property type="entry name" value="PRENYLTRANSFERASES"/>
    <property type="match status" value="1"/>
</dbReference>
<dbReference type="Pfam" id="PF01040">
    <property type="entry name" value="UbiA"/>
    <property type="match status" value="1"/>
</dbReference>
<dbReference type="PROSITE" id="PS00943">
    <property type="entry name" value="UBIA"/>
    <property type="match status" value="1"/>
</dbReference>
<comment type="function">
    <text evidence="1">Catalyzes the prenylation of para-hydroxybenzoate (PHB) with an all-trans polyprenyl group. Mediates the second step in the final reaction sequence of ubiquinone-8 (UQ-8) biosynthesis, which is the condensation of the polyisoprenoid side chain with PHB, generating the first membrane-bound Q intermediate 3-octaprenyl-4-hydroxybenzoate.</text>
</comment>
<comment type="catalytic activity">
    <reaction evidence="1">
        <text>all-trans-octaprenyl diphosphate + 4-hydroxybenzoate = 4-hydroxy-3-(all-trans-octaprenyl)benzoate + diphosphate</text>
        <dbReference type="Rhea" id="RHEA:27782"/>
        <dbReference type="ChEBI" id="CHEBI:1617"/>
        <dbReference type="ChEBI" id="CHEBI:17879"/>
        <dbReference type="ChEBI" id="CHEBI:33019"/>
        <dbReference type="ChEBI" id="CHEBI:57711"/>
        <dbReference type="EC" id="2.5.1.39"/>
    </reaction>
</comment>
<comment type="cofactor">
    <cofactor evidence="1">
        <name>Mg(2+)</name>
        <dbReference type="ChEBI" id="CHEBI:18420"/>
    </cofactor>
</comment>
<comment type="pathway">
    <text evidence="1">Cofactor biosynthesis; ubiquinone biosynthesis.</text>
</comment>
<comment type="subcellular location">
    <subcellularLocation>
        <location evidence="1">Cell inner membrane</location>
        <topology evidence="1">Multi-pass membrane protein</topology>
    </subcellularLocation>
</comment>
<comment type="similarity">
    <text evidence="1">Belongs to the UbiA prenyltransferase family.</text>
</comment>
<feature type="chain" id="PRO_1000186697" description="4-hydroxybenzoate octaprenyltransferase">
    <location>
        <begin position="1"/>
        <end position="301"/>
    </location>
</feature>
<feature type="transmembrane region" description="Helical" evidence="1">
    <location>
        <begin position="34"/>
        <end position="54"/>
    </location>
</feature>
<feature type="transmembrane region" description="Helical" evidence="1">
    <location>
        <begin position="57"/>
        <end position="77"/>
    </location>
</feature>
<feature type="transmembrane region" description="Helical" evidence="1">
    <location>
        <begin position="108"/>
        <end position="128"/>
    </location>
</feature>
<feature type="transmembrane region" description="Helical" evidence="1">
    <location>
        <begin position="163"/>
        <end position="183"/>
    </location>
</feature>
<feature type="transmembrane region" description="Helical" evidence="1">
    <location>
        <begin position="222"/>
        <end position="242"/>
    </location>
</feature>
<feature type="transmembrane region" description="Helical" evidence="1">
    <location>
        <begin position="248"/>
        <end position="268"/>
    </location>
</feature>
<feature type="transmembrane region" description="Helical" evidence="1">
    <location>
        <begin position="280"/>
        <end position="300"/>
    </location>
</feature>
<name>UBIA_XANCB</name>
<sequence length="301" mass="33437">MSKQGFKNVPMAPALTWPERLGQYWKLVRGDRPIGSLLLLWPTWWALWLAAGGLPPLWTLFVFTAGVWLTRSAGCVINDYADRWLDPHVERTKSRPLATGAVSGREALWVFVVLMLVAFALVLSLNWLTVALSVPGLFLAASYPYLKRHTHLPQVYLGMAFGWGIPMGFAAVQGSVPLLAWLLYAANILWATAYDTWYAMVDREDDLRMGSKSTAILFGRYDLIAQGVLYALMFAALVLVGLRAGLSIAYWAGLGIAALLVAYEFHIARHRERGPCFRAFLHNNWVGLAIFVGIAASLALR</sequence>